<sequence>MNTKPLRHGYTTGACAAAAAKGAARMLREQRPVEEVELVLPKGERVAFRLHGQEFDDSAASCFVVKDAGDDPDVTNGAEIHARVRREPLNRSGARTMVFVDGGKGVGTVTKPGLGVGVGNPAINPVPMRMITEGVKEEFSVVCLPQVLHVTISIPNGEELAKKTLNARLGIVGGLSILGTTGIVRPISAKAWTDTLDAALDVARACGCETIVLSTGRTSELVAIHAGIGDRGPGTGKTLPEEAYVMMGDHVGYALRACARKGVRHVILVGQFAKLLKIACGHEQTHVSSSELDLQMLAEWLHELGSRSPVPGPWSRYNTARQVLEESGNDSLFMELVCTRARDAARRLAPSLDIKVLLAGYDSTVLYFG</sequence>
<gene>
    <name evidence="1" type="primary">cbiD</name>
    <name type="ordered locus">Gmet_0478</name>
</gene>
<comment type="function">
    <text evidence="1">Catalyzes the methylation of C-1 in cobalt-precorrin-5B to form cobalt-precorrin-6A.</text>
</comment>
<comment type="catalytic activity">
    <reaction evidence="1">
        <text>Co-precorrin-5B + S-adenosyl-L-methionine = Co-precorrin-6A + S-adenosyl-L-homocysteine</text>
        <dbReference type="Rhea" id="RHEA:26285"/>
        <dbReference type="ChEBI" id="CHEBI:57856"/>
        <dbReference type="ChEBI" id="CHEBI:59789"/>
        <dbReference type="ChEBI" id="CHEBI:60063"/>
        <dbReference type="ChEBI" id="CHEBI:60064"/>
        <dbReference type="EC" id="2.1.1.195"/>
    </reaction>
</comment>
<comment type="pathway">
    <text evidence="1">Cofactor biosynthesis; adenosylcobalamin biosynthesis; cob(II)yrinate a,c-diamide from sirohydrochlorin (anaerobic route): step 6/10.</text>
</comment>
<comment type="similarity">
    <text evidence="1">Belongs to the CbiD family.</text>
</comment>
<evidence type="ECO:0000255" key="1">
    <source>
        <dbReference type="HAMAP-Rule" id="MF_00787"/>
    </source>
</evidence>
<proteinExistence type="inferred from homology"/>
<protein>
    <recommendedName>
        <fullName evidence="1">Cobalt-precorrin-5B C(1)-methyltransferase</fullName>
        <ecNumber evidence="1">2.1.1.195</ecNumber>
    </recommendedName>
    <alternativeName>
        <fullName evidence="1">Cobalt-precorrin-6A synthase</fullName>
    </alternativeName>
</protein>
<feature type="chain" id="PRO_0000257763" description="Cobalt-precorrin-5B C(1)-methyltransferase">
    <location>
        <begin position="1"/>
        <end position="369"/>
    </location>
</feature>
<name>CBID_GEOMG</name>
<accession>Q39YF3</accession>
<dbReference type="EC" id="2.1.1.195" evidence="1"/>
<dbReference type="EMBL" id="CP000148">
    <property type="protein sequence ID" value="ABB30721.1"/>
    <property type="molecule type" value="Genomic_DNA"/>
</dbReference>
<dbReference type="RefSeq" id="WP_004513847.1">
    <property type="nucleotide sequence ID" value="NC_007517.1"/>
</dbReference>
<dbReference type="SMR" id="Q39YF3"/>
<dbReference type="STRING" id="269799.Gmet_0478"/>
<dbReference type="KEGG" id="gme:Gmet_0478"/>
<dbReference type="eggNOG" id="COG1903">
    <property type="taxonomic scope" value="Bacteria"/>
</dbReference>
<dbReference type="HOGENOM" id="CLU_041273_0_0_7"/>
<dbReference type="UniPathway" id="UPA00148">
    <property type="reaction ID" value="UER00227"/>
</dbReference>
<dbReference type="Proteomes" id="UP000007073">
    <property type="component" value="Chromosome"/>
</dbReference>
<dbReference type="GO" id="GO:0043780">
    <property type="term" value="F:cobalt-precorrin-5B C1-methyltransferase activity"/>
    <property type="evidence" value="ECO:0007669"/>
    <property type="project" value="RHEA"/>
</dbReference>
<dbReference type="GO" id="GO:0019251">
    <property type="term" value="P:anaerobic cobalamin biosynthetic process"/>
    <property type="evidence" value="ECO:0007669"/>
    <property type="project" value="UniProtKB-UniRule"/>
</dbReference>
<dbReference type="GO" id="GO:0032259">
    <property type="term" value="P:methylation"/>
    <property type="evidence" value="ECO:0007669"/>
    <property type="project" value="UniProtKB-KW"/>
</dbReference>
<dbReference type="Gene3D" id="3.30.2110.10">
    <property type="entry name" value="CbiD-like"/>
    <property type="match status" value="1"/>
</dbReference>
<dbReference type="HAMAP" id="MF_00787">
    <property type="entry name" value="CbiD"/>
    <property type="match status" value="1"/>
</dbReference>
<dbReference type="InterPro" id="IPR002748">
    <property type="entry name" value="CbiD"/>
</dbReference>
<dbReference type="InterPro" id="IPR036074">
    <property type="entry name" value="CbiD_sf"/>
</dbReference>
<dbReference type="NCBIfam" id="TIGR00312">
    <property type="entry name" value="cbiD"/>
    <property type="match status" value="1"/>
</dbReference>
<dbReference type="NCBIfam" id="NF000849">
    <property type="entry name" value="PRK00075.1-1"/>
    <property type="match status" value="1"/>
</dbReference>
<dbReference type="PANTHER" id="PTHR35863">
    <property type="entry name" value="COBALT-PRECORRIN-5B C(1)-METHYLTRANSFERASE"/>
    <property type="match status" value="1"/>
</dbReference>
<dbReference type="PANTHER" id="PTHR35863:SF1">
    <property type="entry name" value="COBALT-PRECORRIN-5B C(1)-METHYLTRANSFERASE"/>
    <property type="match status" value="1"/>
</dbReference>
<dbReference type="Pfam" id="PF01888">
    <property type="entry name" value="CbiD"/>
    <property type="match status" value="1"/>
</dbReference>
<dbReference type="PIRSF" id="PIRSF026782">
    <property type="entry name" value="CbiD"/>
    <property type="match status" value="1"/>
</dbReference>
<dbReference type="SUPFAM" id="SSF111342">
    <property type="entry name" value="CbiD-like"/>
    <property type="match status" value="1"/>
</dbReference>
<reference key="1">
    <citation type="journal article" date="2009" name="BMC Microbiol.">
        <title>The genome sequence of Geobacter metallireducens: features of metabolism, physiology and regulation common and dissimilar to Geobacter sulfurreducens.</title>
        <authorList>
            <person name="Aklujkar M."/>
            <person name="Krushkal J."/>
            <person name="DiBartolo G."/>
            <person name="Lapidus A."/>
            <person name="Land M.L."/>
            <person name="Lovley D.R."/>
        </authorList>
    </citation>
    <scope>NUCLEOTIDE SEQUENCE [LARGE SCALE GENOMIC DNA]</scope>
    <source>
        <strain>ATCC 53774 / DSM 7210 / GS-15</strain>
    </source>
</reference>
<keyword id="KW-0169">Cobalamin biosynthesis</keyword>
<keyword id="KW-0489">Methyltransferase</keyword>
<keyword id="KW-1185">Reference proteome</keyword>
<keyword id="KW-0949">S-adenosyl-L-methionine</keyword>
<keyword id="KW-0808">Transferase</keyword>
<organism>
    <name type="scientific">Geobacter metallireducens (strain ATCC 53774 / DSM 7210 / GS-15)</name>
    <dbReference type="NCBI Taxonomy" id="269799"/>
    <lineage>
        <taxon>Bacteria</taxon>
        <taxon>Pseudomonadati</taxon>
        <taxon>Thermodesulfobacteriota</taxon>
        <taxon>Desulfuromonadia</taxon>
        <taxon>Geobacterales</taxon>
        <taxon>Geobacteraceae</taxon>
        <taxon>Geobacter</taxon>
    </lineage>
</organism>